<proteinExistence type="evidence at transcript level"/>
<reference key="1">
    <citation type="journal article" date="1995" name="Plant Mol. Biol.">
        <title>Molecular comparison of carbonic anhydrase from Flaveria species demonstrating different photosynthetic pathways.</title>
        <authorList>
            <person name="Ludwig M."/>
            <person name="Burnell J.N."/>
        </authorList>
    </citation>
    <scope>NUCLEOTIDE SEQUENCE [MRNA]</scope>
    <source>
        <tissue>Leaf</tissue>
    </source>
</reference>
<evidence type="ECO:0000250" key="1"/>
<evidence type="ECO:0000305" key="2"/>
<sequence>NPTLYGELAKGQSPKFLVFACSDSRVCPSHILDFQPGEAFVVRNIANMVPPYDTIKHSGAGAAIEYAVLHLKVENIVVIGHSCCGGIKGLMSIPDDGTPASDFIEQWVKLGLPAKSKVKANCNNLEFADLCTKCEKEAVNVSLGNLLTYPFVRDALVNKKLSLKGAHYDFVNGAFDLWNLDFGISPSLLQ</sequence>
<accession>P46513</accession>
<name>CAH2_FLALI</name>
<keyword id="KW-0963">Cytoplasm</keyword>
<keyword id="KW-0456">Lyase</keyword>
<keyword id="KW-0862">Zinc</keyword>
<dbReference type="EC" id="4.2.1.1"/>
<dbReference type="EMBL" id="U19740">
    <property type="protein sequence ID" value="AAA86994.1"/>
    <property type="molecule type" value="mRNA"/>
</dbReference>
<dbReference type="PIR" id="T10740">
    <property type="entry name" value="T10740"/>
</dbReference>
<dbReference type="SMR" id="P46513"/>
<dbReference type="GO" id="GO:0005737">
    <property type="term" value="C:cytoplasm"/>
    <property type="evidence" value="ECO:0007669"/>
    <property type="project" value="UniProtKB-SubCell"/>
</dbReference>
<dbReference type="GO" id="GO:0004089">
    <property type="term" value="F:carbonate dehydratase activity"/>
    <property type="evidence" value="ECO:0007669"/>
    <property type="project" value="UniProtKB-EC"/>
</dbReference>
<dbReference type="GO" id="GO:0008270">
    <property type="term" value="F:zinc ion binding"/>
    <property type="evidence" value="ECO:0007669"/>
    <property type="project" value="InterPro"/>
</dbReference>
<dbReference type="GO" id="GO:0015976">
    <property type="term" value="P:carbon utilization"/>
    <property type="evidence" value="ECO:0007669"/>
    <property type="project" value="InterPro"/>
</dbReference>
<dbReference type="CDD" id="cd00884">
    <property type="entry name" value="beta_CA_cladeB"/>
    <property type="match status" value="1"/>
</dbReference>
<dbReference type="FunFam" id="3.40.1050.10:FF:000003">
    <property type="entry name" value="Carbonic anhydrase"/>
    <property type="match status" value="1"/>
</dbReference>
<dbReference type="Gene3D" id="3.40.1050.10">
    <property type="entry name" value="Carbonic anhydrase"/>
    <property type="match status" value="1"/>
</dbReference>
<dbReference type="InterPro" id="IPR045066">
    <property type="entry name" value="Beta_CA_cladeB"/>
</dbReference>
<dbReference type="InterPro" id="IPR001765">
    <property type="entry name" value="Carbonic_anhydrase"/>
</dbReference>
<dbReference type="InterPro" id="IPR015892">
    <property type="entry name" value="Carbonic_anhydrase_CS"/>
</dbReference>
<dbReference type="InterPro" id="IPR036874">
    <property type="entry name" value="Carbonic_anhydrase_sf"/>
</dbReference>
<dbReference type="PANTHER" id="PTHR11002:SF78">
    <property type="entry name" value="BETA CARBONIC ANHYDRASE 4"/>
    <property type="match status" value="1"/>
</dbReference>
<dbReference type="PANTHER" id="PTHR11002">
    <property type="entry name" value="CARBONIC ANHYDRASE"/>
    <property type="match status" value="1"/>
</dbReference>
<dbReference type="Pfam" id="PF00484">
    <property type="entry name" value="Pro_CA"/>
    <property type="match status" value="1"/>
</dbReference>
<dbReference type="SMART" id="SM00947">
    <property type="entry name" value="Pro_CA"/>
    <property type="match status" value="1"/>
</dbReference>
<dbReference type="SUPFAM" id="SSF53056">
    <property type="entry name" value="beta-carbonic anhydrase, cab"/>
    <property type="match status" value="1"/>
</dbReference>
<dbReference type="PROSITE" id="PS00704">
    <property type="entry name" value="PROK_CO2_ANHYDRASE_1"/>
    <property type="match status" value="1"/>
</dbReference>
<dbReference type="PROSITE" id="PS00705">
    <property type="entry name" value="PROK_CO2_ANHYDRASE_2"/>
    <property type="match status" value="1"/>
</dbReference>
<feature type="chain" id="PRO_0000077456" description="Carbonic anhydrase 2">
    <location>
        <begin position="1" status="less than"/>
        <end position="190"/>
    </location>
</feature>
<feature type="non-terminal residue">
    <location>
        <position position="1"/>
    </location>
</feature>
<protein>
    <recommendedName>
        <fullName>Carbonic anhydrase 2</fullName>
        <ecNumber>4.2.1.1</ecNumber>
    </recommendedName>
    <alternativeName>
        <fullName>Carbonate dehydratase 2</fullName>
    </alternativeName>
</protein>
<organism>
    <name type="scientific">Flaveria linearis</name>
    <name type="common">Narrowleaf yellowtops</name>
    <dbReference type="NCBI Taxonomy" id="4225"/>
    <lineage>
        <taxon>Eukaryota</taxon>
        <taxon>Viridiplantae</taxon>
        <taxon>Streptophyta</taxon>
        <taxon>Embryophyta</taxon>
        <taxon>Tracheophyta</taxon>
        <taxon>Spermatophyta</taxon>
        <taxon>Magnoliopsida</taxon>
        <taxon>eudicotyledons</taxon>
        <taxon>Gunneridae</taxon>
        <taxon>Pentapetalae</taxon>
        <taxon>asterids</taxon>
        <taxon>campanulids</taxon>
        <taxon>Asterales</taxon>
        <taxon>Asteraceae</taxon>
        <taxon>Asteroideae</taxon>
        <taxon>Heliantheae alliance</taxon>
        <taxon>Tageteae</taxon>
        <taxon>Flaveria</taxon>
    </lineage>
</organism>
<comment type="function">
    <text>Reversible hydration of carbon dioxide.</text>
</comment>
<comment type="catalytic activity">
    <reaction>
        <text>hydrogencarbonate + H(+) = CO2 + H2O</text>
        <dbReference type="Rhea" id="RHEA:10748"/>
        <dbReference type="ChEBI" id="CHEBI:15377"/>
        <dbReference type="ChEBI" id="CHEBI:15378"/>
        <dbReference type="ChEBI" id="CHEBI:16526"/>
        <dbReference type="ChEBI" id="CHEBI:17544"/>
        <dbReference type="EC" id="4.2.1.1"/>
    </reaction>
</comment>
<comment type="subunit">
    <text evidence="1">Homohexamer.</text>
</comment>
<comment type="subcellular location">
    <subcellularLocation>
        <location evidence="2">Cytoplasm</location>
    </subcellularLocation>
</comment>
<comment type="domain">
    <text evidence="1">Possesses a transit-like peptide, but it is proposed that this peptide is not removed and that therefore the enzyme stays in the cytoplasm instead of going to the chloroplast.</text>
</comment>
<comment type="similarity">
    <text evidence="2">Belongs to the beta-class carbonic anhydrase family.</text>
</comment>